<reference key="1">
    <citation type="journal article" date="1999" name="Plant Cell">
        <title>Isolation and characterization of SYN1, a RAD21-like gene essential for meiosis in Arabidopsis.</title>
        <authorList>
            <person name="Bai X."/>
            <person name="Peirson B.N."/>
            <person name="Dong F."/>
            <person name="Xue C."/>
            <person name="Makaroff C.A."/>
        </authorList>
    </citation>
    <scope>NUCLEOTIDE SEQUENCE [MRNA] (ISOFORMS 1 AND 2)</scope>
    <scope>ALTERNATIVE PROMOTER USAGE</scope>
    <source>
        <strain>cv. Wassilewskija</strain>
    </source>
</reference>
<reference key="2">
    <citation type="journal article" date="1999" name="Plant J.">
        <title>The DIF1 gene of Arabidopsis is required for meiotic chromosome segregation and belongs to the REC8/RAD21 cohesin gene family.</title>
        <authorList>
            <person name="Bhatt A.M."/>
            <person name="Lister C."/>
            <person name="Page T."/>
            <person name="Fransz P.F."/>
            <person name="Findlay K."/>
            <person name="Jones G.H."/>
            <person name="Dickinson H.G."/>
            <person name="Dean C."/>
        </authorList>
    </citation>
    <scope>NUCLEOTIDE SEQUENCE [MRNA] (ISOFORM 1)</scope>
    <source>
        <strain>cv. Landsberg erecta</strain>
    </source>
</reference>
<reference key="3">
    <citation type="journal article" date="1997" name="DNA Res.">
        <title>Structural analysis of Arabidopsis thaliana chromosome 5. I. Sequence features of the 1.6 Mb regions covered by twenty physically assigned P1 clones.</title>
        <authorList>
            <person name="Sato S."/>
            <person name="Kotani H."/>
            <person name="Nakamura Y."/>
            <person name="Kaneko T."/>
            <person name="Asamizu E."/>
            <person name="Fukami M."/>
            <person name="Miyajima N."/>
            <person name="Tabata S."/>
        </authorList>
    </citation>
    <scope>NUCLEOTIDE SEQUENCE [LARGE SCALE GENOMIC DNA]</scope>
    <source>
        <strain>cv. Columbia</strain>
    </source>
</reference>
<reference key="4">
    <citation type="journal article" date="2017" name="Plant J.">
        <title>Araport11: a complete reannotation of the Arabidopsis thaliana reference genome.</title>
        <authorList>
            <person name="Cheng C.Y."/>
            <person name="Krishnakumar V."/>
            <person name="Chan A.P."/>
            <person name="Thibaud-Nissen F."/>
            <person name="Schobel S."/>
            <person name="Town C.D."/>
        </authorList>
    </citation>
    <scope>GENOME REANNOTATION</scope>
    <source>
        <strain>cv. Columbia</strain>
    </source>
</reference>
<evidence type="ECO:0000250" key="1"/>
<evidence type="ECO:0000256" key="2">
    <source>
        <dbReference type="SAM" id="MobiDB-lite"/>
    </source>
</evidence>
<evidence type="ECO:0000303" key="3">
    <source>
    </source>
</evidence>
<evidence type="ECO:0000303" key="4">
    <source>
    </source>
</evidence>
<evidence type="ECO:0000305" key="5"/>
<keyword id="KW-0877">Alternative promoter usage</keyword>
<keyword id="KW-0131">Cell cycle</keyword>
<keyword id="KW-0159">Chromosome partition</keyword>
<keyword id="KW-0469">Meiosis</keyword>
<keyword id="KW-0539">Nucleus</keyword>
<keyword id="KW-1185">Reference proteome</keyword>
<accession>Q9S7T7</accession>
<accession>Q3E9L1</accession>
<accession>Q9SQI1</accession>
<name>SCC11_ARATH</name>
<dbReference type="EMBL" id="AF080620">
    <property type="protein sequence ID" value="AAF08982.1"/>
    <property type="molecule type" value="mRNA"/>
</dbReference>
<dbReference type="EMBL" id="AF080619">
    <property type="protein sequence ID" value="AAF08981.1"/>
    <property type="molecule type" value="mRNA"/>
</dbReference>
<dbReference type="EMBL" id="AJ238306">
    <property type="protein sequence ID" value="CAB64643.1"/>
    <property type="molecule type" value="mRNA"/>
</dbReference>
<dbReference type="EMBL" id="AB005241">
    <property type="protein sequence ID" value="BAB11538.1"/>
    <property type="molecule type" value="Genomic_DNA"/>
</dbReference>
<dbReference type="EMBL" id="CP002688">
    <property type="protein sequence ID" value="AED90879.1"/>
    <property type="molecule type" value="Genomic_DNA"/>
</dbReference>
<dbReference type="EMBL" id="CP002688">
    <property type="protein sequence ID" value="AED90880.1"/>
    <property type="molecule type" value="Genomic_DNA"/>
</dbReference>
<dbReference type="PIR" id="T52571">
    <property type="entry name" value="T52571"/>
</dbReference>
<dbReference type="RefSeq" id="NP_196168.1">
    <molecule id="Q9S7T7-2"/>
    <property type="nucleotide sequence ID" value="NM_120631.2"/>
</dbReference>
<dbReference type="RefSeq" id="NP_850773.1">
    <molecule id="Q9S7T7-1"/>
    <property type="nucleotide sequence ID" value="NM_180442.2"/>
</dbReference>
<dbReference type="FunCoup" id="Q9S7T7">
    <property type="interactions" value="1"/>
</dbReference>
<dbReference type="STRING" id="3702.Q9S7T7"/>
<dbReference type="GlyGen" id="Q9S7T7">
    <property type="glycosylation" value="2 sites"/>
</dbReference>
<dbReference type="PaxDb" id="3702-AT5G05490.1"/>
<dbReference type="ProteomicsDB" id="232936">
    <molecule id="Q9S7T7-1"/>
</dbReference>
<dbReference type="EnsemblPlants" id="AT5G05490.1">
    <molecule id="Q9S7T7-1"/>
    <property type="protein sequence ID" value="AT5G05490.1"/>
    <property type="gene ID" value="AT5G05490"/>
</dbReference>
<dbReference type="EnsemblPlants" id="AT5G05490.2">
    <molecule id="Q9S7T7-2"/>
    <property type="protein sequence ID" value="AT5G05490.2"/>
    <property type="gene ID" value="AT5G05490"/>
</dbReference>
<dbReference type="GeneID" id="830432"/>
<dbReference type="Gramene" id="AT5G05490.1">
    <molecule id="Q9S7T7-1"/>
    <property type="protein sequence ID" value="AT5G05490.1"/>
    <property type="gene ID" value="AT5G05490"/>
</dbReference>
<dbReference type="Gramene" id="AT5G05490.2">
    <molecule id="Q9S7T7-2"/>
    <property type="protein sequence ID" value="AT5G05490.2"/>
    <property type="gene ID" value="AT5G05490"/>
</dbReference>
<dbReference type="KEGG" id="ath:AT5G05490"/>
<dbReference type="Araport" id="AT5G05490"/>
<dbReference type="TAIR" id="AT5G05490">
    <property type="gene designation" value="SYN1"/>
</dbReference>
<dbReference type="eggNOG" id="KOG1213">
    <property type="taxonomic scope" value="Eukaryota"/>
</dbReference>
<dbReference type="InParanoid" id="Q9S7T7"/>
<dbReference type="OMA" id="THDFIKV"/>
<dbReference type="OrthoDB" id="10071381at2759"/>
<dbReference type="PhylomeDB" id="Q9S7T7"/>
<dbReference type="PRO" id="PR:Q9S7T7"/>
<dbReference type="Proteomes" id="UP000006548">
    <property type="component" value="Chromosome 5"/>
</dbReference>
<dbReference type="ExpressionAtlas" id="Q9S7T7">
    <property type="expression patterns" value="baseline and differential"/>
</dbReference>
<dbReference type="GO" id="GO:0005694">
    <property type="term" value="C:chromosome"/>
    <property type="evidence" value="ECO:0000314"/>
    <property type="project" value="TAIR"/>
</dbReference>
<dbReference type="GO" id="GO:0008278">
    <property type="term" value="C:cohesin complex"/>
    <property type="evidence" value="ECO:0000250"/>
    <property type="project" value="TAIR"/>
</dbReference>
<dbReference type="GO" id="GO:0005634">
    <property type="term" value="C:nucleus"/>
    <property type="evidence" value="ECO:0007669"/>
    <property type="project" value="UniProtKB-SubCell"/>
</dbReference>
<dbReference type="GO" id="GO:0051276">
    <property type="term" value="P:chromosome organization"/>
    <property type="evidence" value="ECO:0000315"/>
    <property type="project" value="TAIR"/>
</dbReference>
<dbReference type="GO" id="GO:0010032">
    <property type="term" value="P:meiotic chromosome condensation"/>
    <property type="evidence" value="ECO:0000315"/>
    <property type="project" value="TAIR"/>
</dbReference>
<dbReference type="GO" id="GO:0051754">
    <property type="term" value="P:meiotic sister chromatid cohesion, centromeric"/>
    <property type="evidence" value="ECO:0000315"/>
    <property type="project" value="TAIR"/>
</dbReference>
<dbReference type="GO" id="GO:0007062">
    <property type="term" value="P:sister chromatid cohesion"/>
    <property type="evidence" value="ECO:0000315"/>
    <property type="project" value="TAIR"/>
</dbReference>
<dbReference type="GO" id="GO:0051455">
    <property type="term" value="P:spindle attachment to meiosis I kinetochore"/>
    <property type="evidence" value="ECO:0000315"/>
    <property type="project" value="TAIR"/>
</dbReference>
<dbReference type="CDD" id="cd21793">
    <property type="entry name" value="Rad21_Rec8_M_AtSYN1-like"/>
    <property type="match status" value="1"/>
</dbReference>
<dbReference type="FunFam" id="1.10.10.580:FF:000007">
    <property type="entry name" value="Sister chromatid cohesion 1 protein 1"/>
    <property type="match status" value="1"/>
</dbReference>
<dbReference type="Gene3D" id="1.10.10.580">
    <property type="entry name" value="Structural maintenance of chromosome 1. Chain E"/>
    <property type="match status" value="1"/>
</dbReference>
<dbReference type="InterPro" id="IPR039781">
    <property type="entry name" value="Rad21/Rec8-like"/>
</dbReference>
<dbReference type="InterPro" id="IPR006909">
    <property type="entry name" value="Rad21/Rec8_C_eu"/>
</dbReference>
<dbReference type="InterPro" id="IPR006910">
    <property type="entry name" value="Rad21_Rec8_N"/>
</dbReference>
<dbReference type="InterPro" id="IPR023093">
    <property type="entry name" value="ScpA-like_C"/>
</dbReference>
<dbReference type="InterPro" id="IPR036390">
    <property type="entry name" value="WH_DNA-bd_sf"/>
</dbReference>
<dbReference type="PANTHER" id="PTHR12585">
    <property type="entry name" value="SCC1 / RAD21 FAMILY MEMBER"/>
    <property type="match status" value="1"/>
</dbReference>
<dbReference type="PANTHER" id="PTHR12585:SF64">
    <property type="entry name" value="SISTER CHROMATID COHESION 1 PROTEIN 1"/>
    <property type="match status" value="1"/>
</dbReference>
<dbReference type="Pfam" id="PF04824">
    <property type="entry name" value="Rad21_Rec8"/>
    <property type="match status" value="1"/>
</dbReference>
<dbReference type="Pfam" id="PF04825">
    <property type="entry name" value="Rad21_Rec8_N"/>
    <property type="match status" value="1"/>
</dbReference>
<dbReference type="SUPFAM" id="SSF46785">
    <property type="entry name" value="Winged helix' DNA-binding domain"/>
    <property type="match status" value="1"/>
</dbReference>
<feature type="chain" id="PRO_0000097875" description="Sister chromatid cohesion 1 protein 1">
    <location>
        <begin position="1"/>
        <end position="627"/>
    </location>
</feature>
<feature type="region of interest" description="Disordered" evidence="2">
    <location>
        <begin position="211"/>
        <end position="294"/>
    </location>
</feature>
<feature type="region of interest" description="Disordered" evidence="2">
    <location>
        <begin position="395"/>
        <end position="416"/>
    </location>
</feature>
<feature type="region of interest" description="Disordered" evidence="2">
    <location>
        <begin position="461"/>
        <end position="510"/>
    </location>
</feature>
<feature type="compositionally biased region" description="Basic and acidic residues" evidence="2">
    <location>
        <begin position="254"/>
        <end position="263"/>
    </location>
</feature>
<feature type="compositionally biased region" description="Basic and acidic residues" evidence="2">
    <location>
        <begin position="272"/>
        <end position="282"/>
    </location>
</feature>
<feature type="compositionally biased region" description="Basic and acidic residues" evidence="2">
    <location>
        <begin position="395"/>
        <end position="408"/>
    </location>
</feature>
<feature type="compositionally biased region" description="Polar residues" evidence="2">
    <location>
        <begin position="467"/>
        <end position="487"/>
    </location>
</feature>
<feature type="splice variant" id="VSP_007492" description="In isoform 1." evidence="3 4">
    <original>MLRLESLIVTVWGPAT</original>
    <variation>MFYSHQ</variation>
    <location>
        <begin position="1"/>
        <end position="16"/>
    </location>
</feature>
<comment type="function">
    <text>Involved in chromosome condensation, pairing and segregation during meiosis. Responsible for cohesion between replicated sister chromatids.</text>
</comment>
<comment type="subunit">
    <text evidence="1">Component of the cohesin complex.</text>
</comment>
<comment type="subcellular location">
    <subcellularLocation>
        <location>Nucleus</location>
    </subcellularLocation>
</comment>
<comment type="alternative products">
    <event type="alternative promoter"/>
    <isoform>
        <id>Q9S7T7-1</id>
        <name>2</name>
        <sequence type="displayed"/>
    </isoform>
    <isoform>
        <id>Q9S7T7-2</id>
        <name>1</name>
        <sequence type="described" ref="VSP_007492"/>
    </isoform>
</comment>
<comment type="tissue specificity">
    <text>Isoform 2 is expressed at low levels in buds, leaves and roots, whereas expression of isoform 1 is confined to buds.</text>
</comment>
<comment type="similarity">
    <text evidence="5">Belongs to the rad21 family.</text>
</comment>
<sequence>MLRLESLIVTVWGPATLLARKAPLGQIWMAATLHAKINRKKLDKLDIIQICEEILNPSVPMALRLSGILMGGVVIVYERKVKLLFDDVNRFLVEINGAWRTKSVPDPTLLPKGKTHARKEAVTLPENEEADFGDFEQTRNVPKFGNYMDFQQTFISMRLDESHVNNNPEPEDLGQQFHQADAENITLFEYHGSFQTNNETYDRFERFDIEGDDETQMNSNPREGAEIPTTLIPSPPRHHDIPEGVNPTSPQRQEQQENRRDGFAEQMEEQNIPDKEEHDRPQPAKKRARKTATSAMDYEQTIIAGHVYQSWLQDTSDILCRGEKRKVRGTIRPDMESFKRANMPPTQLFEKDSSYPPQLYQLWSKNTQVLQTSSSESRHPDLRAEQSPGFVQERMHNHHQTDHHERSDTSSQNLDSPAEILRTVRTGKGASVESMMAGSRASPETINRQAADINVTPFYSGDDVRSMPSTPSARGAASINNIEISSKSRMPNRKRPNSSPRRGLEPVAEERPWEHREYEFEFSMLPEKRFTADKEILFETASTQTQKPVCNQSDEMITDSIKSHLKTHFETPGAPQVESLNKLAVGMDRNAAAKLFFQSCVLATRGVIKVNQAEPYGDILIARGPNM</sequence>
<proteinExistence type="evidence at transcript level"/>
<protein>
    <recommendedName>
        <fullName>Sister chromatid cohesion 1 protein 1</fullName>
    </recommendedName>
    <alternativeName>
        <fullName>Protein DETERMINATE INFERTILE 1</fullName>
    </alternativeName>
    <alternativeName>
        <fullName>SCC1 homolog 1</fullName>
    </alternativeName>
</protein>
<gene>
    <name type="primary">SYN1</name>
    <name type="synonym">DIF1</name>
    <name type="ordered locus">At5g05490</name>
    <name type="ORF">MOP10.3</name>
</gene>
<organism>
    <name type="scientific">Arabidopsis thaliana</name>
    <name type="common">Mouse-ear cress</name>
    <dbReference type="NCBI Taxonomy" id="3702"/>
    <lineage>
        <taxon>Eukaryota</taxon>
        <taxon>Viridiplantae</taxon>
        <taxon>Streptophyta</taxon>
        <taxon>Embryophyta</taxon>
        <taxon>Tracheophyta</taxon>
        <taxon>Spermatophyta</taxon>
        <taxon>Magnoliopsida</taxon>
        <taxon>eudicotyledons</taxon>
        <taxon>Gunneridae</taxon>
        <taxon>Pentapetalae</taxon>
        <taxon>rosids</taxon>
        <taxon>malvids</taxon>
        <taxon>Brassicales</taxon>
        <taxon>Brassicaceae</taxon>
        <taxon>Camelineae</taxon>
        <taxon>Arabidopsis</taxon>
    </lineage>
</organism>